<proteinExistence type="inferred from homology"/>
<comment type="function">
    <text evidence="1">Involved in mRNA degradation. Catalyzes the phosphorolysis of single-stranded polyribonucleotides processively in the 3'- to 5'-direction.</text>
</comment>
<comment type="catalytic activity">
    <reaction evidence="1">
        <text>RNA(n+1) + phosphate = RNA(n) + a ribonucleoside 5'-diphosphate</text>
        <dbReference type="Rhea" id="RHEA:22096"/>
        <dbReference type="Rhea" id="RHEA-COMP:14527"/>
        <dbReference type="Rhea" id="RHEA-COMP:17342"/>
        <dbReference type="ChEBI" id="CHEBI:43474"/>
        <dbReference type="ChEBI" id="CHEBI:57930"/>
        <dbReference type="ChEBI" id="CHEBI:140395"/>
        <dbReference type="EC" id="2.7.7.8"/>
    </reaction>
</comment>
<comment type="cofactor">
    <cofactor evidence="1">
        <name>Mg(2+)</name>
        <dbReference type="ChEBI" id="CHEBI:18420"/>
    </cofactor>
</comment>
<comment type="subcellular location">
    <subcellularLocation>
        <location evidence="1">Cytoplasm</location>
    </subcellularLocation>
</comment>
<comment type="similarity">
    <text evidence="1">Belongs to the polyribonucleotide nucleotidyltransferase family.</text>
</comment>
<evidence type="ECO:0000255" key="1">
    <source>
        <dbReference type="HAMAP-Rule" id="MF_01595"/>
    </source>
</evidence>
<dbReference type="EC" id="2.7.7.8" evidence="1"/>
<dbReference type="EMBL" id="CP000702">
    <property type="protein sequence ID" value="ABQ47451.1"/>
    <property type="molecule type" value="Genomic_DNA"/>
</dbReference>
<dbReference type="RefSeq" id="WP_011943899.1">
    <property type="nucleotide sequence ID" value="NC_009486.1"/>
</dbReference>
<dbReference type="SMR" id="A5IMM8"/>
<dbReference type="STRING" id="390874.Tpet_1438"/>
<dbReference type="KEGG" id="tpt:Tpet_1438"/>
<dbReference type="eggNOG" id="COG1185">
    <property type="taxonomic scope" value="Bacteria"/>
</dbReference>
<dbReference type="HOGENOM" id="CLU_004217_2_2_0"/>
<dbReference type="Proteomes" id="UP000006558">
    <property type="component" value="Chromosome"/>
</dbReference>
<dbReference type="GO" id="GO:0005829">
    <property type="term" value="C:cytosol"/>
    <property type="evidence" value="ECO:0007669"/>
    <property type="project" value="TreeGrafter"/>
</dbReference>
<dbReference type="GO" id="GO:0000175">
    <property type="term" value="F:3'-5'-RNA exonuclease activity"/>
    <property type="evidence" value="ECO:0007669"/>
    <property type="project" value="TreeGrafter"/>
</dbReference>
<dbReference type="GO" id="GO:0000287">
    <property type="term" value="F:magnesium ion binding"/>
    <property type="evidence" value="ECO:0007669"/>
    <property type="project" value="UniProtKB-UniRule"/>
</dbReference>
<dbReference type="GO" id="GO:0004654">
    <property type="term" value="F:polyribonucleotide nucleotidyltransferase activity"/>
    <property type="evidence" value="ECO:0007669"/>
    <property type="project" value="UniProtKB-UniRule"/>
</dbReference>
<dbReference type="GO" id="GO:0003723">
    <property type="term" value="F:RNA binding"/>
    <property type="evidence" value="ECO:0007669"/>
    <property type="project" value="UniProtKB-UniRule"/>
</dbReference>
<dbReference type="GO" id="GO:0006402">
    <property type="term" value="P:mRNA catabolic process"/>
    <property type="evidence" value="ECO:0007669"/>
    <property type="project" value="UniProtKB-UniRule"/>
</dbReference>
<dbReference type="GO" id="GO:0006396">
    <property type="term" value="P:RNA processing"/>
    <property type="evidence" value="ECO:0007669"/>
    <property type="project" value="InterPro"/>
</dbReference>
<dbReference type="CDD" id="cd02393">
    <property type="entry name" value="KH-I_PNPase"/>
    <property type="match status" value="1"/>
</dbReference>
<dbReference type="CDD" id="cd11363">
    <property type="entry name" value="RNase_PH_PNPase_1"/>
    <property type="match status" value="1"/>
</dbReference>
<dbReference type="CDD" id="cd11364">
    <property type="entry name" value="RNase_PH_PNPase_2"/>
    <property type="match status" value="1"/>
</dbReference>
<dbReference type="FunFam" id="3.30.1370.10:FF:000001">
    <property type="entry name" value="Polyribonucleotide nucleotidyltransferase"/>
    <property type="match status" value="1"/>
</dbReference>
<dbReference type="FunFam" id="3.30.230.70:FF:000001">
    <property type="entry name" value="Polyribonucleotide nucleotidyltransferase"/>
    <property type="match status" value="1"/>
</dbReference>
<dbReference type="FunFam" id="3.30.230.70:FF:000002">
    <property type="entry name" value="Polyribonucleotide nucleotidyltransferase"/>
    <property type="match status" value="1"/>
</dbReference>
<dbReference type="Gene3D" id="3.30.230.70">
    <property type="entry name" value="GHMP Kinase, N-terminal domain"/>
    <property type="match status" value="2"/>
</dbReference>
<dbReference type="Gene3D" id="3.30.1370.10">
    <property type="entry name" value="K Homology domain, type 1"/>
    <property type="match status" value="1"/>
</dbReference>
<dbReference type="Gene3D" id="2.40.50.140">
    <property type="entry name" value="Nucleic acid-binding proteins"/>
    <property type="match status" value="1"/>
</dbReference>
<dbReference type="HAMAP" id="MF_01595">
    <property type="entry name" value="PNPase"/>
    <property type="match status" value="1"/>
</dbReference>
<dbReference type="InterPro" id="IPR001247">
    <property type="entry name" value="ExoRNase_PH_dom1"/>
</dbReference>
<dbReference type="InterPro" id="IPR015847">
    <property type="entry name" value="ExoRNase_PH_dom2"/>
</dbReference>
<dbReference type="InterPro" id="IPR036345">
    <property type="entry name" value="ExoRNase_PH_dom2_sf"/>
</dbReference>
<dbReference type="InterPro" id="IPR004087">
    <property type="entry name" value="KH_dom"/>
</dbReference>
<dbReference type="InterPro" id="IPR004088">
    <property type="entry name" value="KH_dom_type_1"/>
</dbReference>
<dbReference type="InterPro" id="IPR036612">
    <property type="entry name" value="KH_dom_type_1_sf"/>
</dbReference>
<dbReference type="InterPro" id="IPR012340">
    <property type="entry name" value="NA-bd_OB-fold"/>
</dbReference>
<dbReference type="InterPro" id="IPR012162">
    <property type="entry name" value="PNPase"/>
</dbReference>
<dbReference type="InterPro" id="IPR027408">
    <property type="entry name" value="PNPase/RNase_PH_dom_sf"/>
</dbReference>
<dbReference type="InterPro" id="IPR015848">
    <property type="entry name" value="PNPase_PH_RNA-bd_bac/org-type"/>
</dbReference>
<dbReference type="InterPro" id="IPR020568">
    <property type="entry name" value="Ribosomal_Su5_D2-typ_SF"/>
</dbReference>
<dbReference type="InterPro" id="IPR003029">
    <property type="entry name" value="S1_domain"/>
</dbReference>
<dbReference type="NCBIfam" id="TIGR03591">
    <property type="entry name" value="polynuc_phos"/>
    <property type="match status" value="1"/>
</dbReference>
<dbReference type="NCBIfam" id="NF008805">
    <property type="entry name" value="PRK11824.1"/>
    <property type="match status" value="1"/>
</dbReference>
<dbReference type="PANTHER" id="PTHR11252">
    <property type="entry name" value="POLYRIBONUCLEOTIDE NUCLEOTIDYLTRANSFERASE"/>
    <property type="match status" value="1"/>
</dbReference>
<dbReference type="PANTHER" id="PTHR11252:SF0">
    <property type="entry name" value="POLYRIBONUCLEOTIDE NUCLEOTIDYLTRANSFERASE 1, MITOCHONDRIAL"/>
    <property type="match status" value="1"/>
</dbReference>
<dbReference type="Pfam" id="PF00013">
    <property type="entry name" value="KH_1"/>
    <property type="match status" value="1"/>
</dbReference>
<dbReference type="Pfam" id="PF03726">
    <property type="entry name" value="PNPase"/>
    <property type="match status" value="1"/>
</dbReference>
<dbReference type="Pfam" id="PF01138">
    <property type="entry name" value="RNase_PH"/>
    <property type="match status" value="2"/>
</dbReference>
<dbReference type="Pfam" id="PF03725">
    <property type="entry name" value="RNase_PH_C"/>
    <property type="match status" value="2"/>
</dbReference>
<dbReference type="Pfam" id="PF00575">
    <property type="entry name" value="S1"/>
    <property type="match status" value="1"/>
</dbReference>
<dbReference type="PIRSF" id="PIRSF005499">
    <property type="entry name" value="PNPase"/>
    <property type="match status" value="1"/>
</dbReference>
<dbReference type="SMART" id="SM00322">
    <property type="entry name" value="KH"/>
    <property type="match status" value="1"/>
</dbReference>
<dbReference type="SMART" id="SM00316">
    <property type="entry name" value="S1"/>
    <property type="match status" value="1"/>
</dbReference>
<dbReference type="SUPFAM" id="SSF54791">
    <property type="entry name" value="Eukaryotic type KH-domain (KH-domain type I)"/>
    <property type="match status" value="1"/>
</dbReference>
<dbReference type="SUPFAM" id="SSF50249">
    <property type="entry name" value="Nucleic acid-binding proteins"/>
    <property type="match status" value="1"/>
</dbReference>
<dbReference type="SUPFAM" id="SSF55666">
    <property type="entry name" value="Ribonuclease PH domain 2-like"/>
    <property type="match status" value="2"/>
</dbReference>
<dbReference type="SUPFAM" id="SSF54211">
    <property type="entry name" value="Ribosomal protein S5 domain 2-like"/>
    <property type="match status" value="2"/>
</dbReference>
<dbReference type="PROSITE" id="PS50084">
    <property type="entry name" value="KH_TYPE_1"/>
    <property type="match status" value="1"/>
</dbReference>
<dbReference type="PROSITE" id="PS50126">
    <property type="entry name" value="S1"/>
    <property type="match status" value="1"/>
</dbReference>
<protein>
    <recommendedName>
        <fullName evidence="1">Polyribonucleotide nucleotidyltransferase</fullName>
        <ecNumber evidence="1">2.7.7.8</ecNumber>
    </recommendedName>
    <alternativeName>
        <fullName evidence="1">Polynucleotide phosphorylase</fullName>
        <shortName evidence="1">PNPase</shortName>
    </alternativeName>
</protein>
<gene>
    <name evidence="1" type="primary">pnp</name>
    <name type="ordered locus">Tpet_1438</name>
</gene>
<accession>A5IMM8</accession>
<name>PNP_THEP1</name>
<keyword id="KW-0963">Cytoplasm</keyword>
<keyword id="KW-0460">Magnesium</keyword>
<keyword id="KW-0479">Metal-binding</keyword>
<keyword id="KW-0548">Nucleotidyltransferase</keyword>
<keyword id="KW-0694">RNA-binding</keyword>
<keyword id="KW-0808">Transferase</keyword>
<organism>
    <name type="scientific">Thermotoga petrophila (strain ATCC BAA-488 / DSM 13995 / JCM 10881 / RKU-1)</name>
    <dbReference type="NCBI Taxonomy" id="390874"/>
    <lineage>
        <taxon>Bacteria</taxon>
        <taxon>Thermotogati</taxon>
        <taxon>Thermotogota</taxon>
        <taxon>Thermotogae</taxon>
        <taxon>Thermotogales</taxon>
        <taxon>Thermotogaceae</taxon>
        <taxon>Thermotoga</taxon>
    </lineage>
</organism>
<sequence length="708" mass="78591">MKEWRRNILGRELVVQYGKVAKQSSGSALVRFGDTVVLATANISDKAVEGIDFVPLTVEFQERFYAAGKIPGGFIKREGKPSESAILSARLIDRPIRPLFPKKLRNEVQVIVTVLSVDPNVPPDVVGIFAASLALNVSKIPFEGIVAGIRVGYRDGQFIALPSEEDIEKGLMDITVAGTKDAVTMVEGEAKEVAEEDMVKALRFAHSVIKELVDFQEEILSEFNVEKIPVVEPTPPEGLVEAFKDLLNKEELERRILVKVKKEREVALKEYEEQLLNQIAEKLSVTDLEGIKPFVSELYEDAVKKTMRRLIVEKGIRADGRKPTEIRPISCEVGLFPRTHGSALFTRGETQSLGIVTLGAPMDVQIIDTLLEEGVKRFMLHYNFPPFCTGEVKPLRGPSRREIGHGHLAERALKNMLPPEEEFPYTIRVVSEILESNGSSSMATVCSGSLALMDAGVPIKKHVAGIAMGLILEEDAEIILTDIIGMEDHYGDMDFKVAGTRDGITAFQMDCKVSGVSDELLMKALMQAREARMYILDRMYETISAPRPHLSKYAPIIKVTKVDPEKVADVIGPGGRVIKKIIKDFDVKVEIDDETGLVKVVGSSEENVDKAIELIREIAKEIEVGEVLEGKVTRIEPYGLFIEVRPGKIGLLHQSKVGEDMRQFLKKVKVGDTIKVQVINIDDLGRLQFKRVTEGENTQHGKTHSKRN</sequence>
<reference key="1">
    <citation type="submission" date="2007-05" db="EMBL/GenBank/DDBJ databases">
        <title>Complete sequence of Thermotoga petrophila RKU-1.</title>
        <authorList>
            <consortium name="US DOE Joint Genome Institute"/>
            <person name="Copeland A."/>
            <person name="Lucas S."/>
            <person name="Lapidus A."/>
            <person name="Barry K."/>
            <person name="Glavina del Rio T."/>
            <person name="Dalin E."/>
            <person name="Tice H."/>
            <person name="Pitluck S."/>
            <person name="Sims D."/>
            <person name="Brettin T."/>
            <person name="Bruce D."/>
            <person name="Detter J.C."/>
            <person name="Han C."/>
            <person name="Tapia R."/>
            <person name="Schmutz J."/>
            <person name="Larimer F."/>
            <person name="Land M."/>
            <person name="Hauser L."/>
            <person name="Kyrpides N."/>
            <person name="Mikhailova N."/>
            <person name="Nelson K."/>
            <person name="Gogarten J.P."/>
            <person name="Noll K."/>
            <person name="Richardson P."/>
        </authorList>
    </citation>
    <scope>NUCLEOTIDE SEQUENCE [LARGE SCALE GENOMIC DNA]</scope>
    <source>
        <strain>ATCC BAA-488 / DSM 13995 / JCM 10881 / RKU-1</strain>
    </source>
</reference>
<feature type="chain" id="PRO_0000329914" description="Polyribonucleotide nucleotidyltransferase">
    <location>
        <begin position="1"/>
        <end position="708"/>
    </location>
</feature>
<feature type="domain" description="KH" evidence="1">
    <location>
        <begin position="555"/>
        <end position="615"/>
    </location>
</feature>
<feature type="domain" description="S1 motif" evidence="1">
    <location>
        <begin position="625"/>
        <end position="692"/>
    </location>
</feature>
<feature type="binding site" evidence="1">
    <location>
        <position position="488"/>
    </location>
    <ligand>
        <name>Mg(2+)</name>
        <dbReference type="ChEBI" id="CHEBI:18420"/>
    </ligand>
</feature>
<feature type="binding site" evidence="1">
    <location>
        <position position="494"/>
    </location>
    <ligand>
        <name>Mg(2+)</name>
        <dbReference type="ChEBI" id="CHEBI:18420"/>
    </ligand>
</feature>